<organism>
    <name type="scientific">Bacillus cytotoxicus (strain DSM 22905 / CIP 110041 / 391-98 / NVH 391-98)</name>
    <dbReference type="NCBI Taxonomy" id="315749"/>
    <lineage>
        <taxon>Bacteria</taxon>
        <taxon>Bacillati</taxon>
        <taxon>Bacillota</taxon>
        <taxon>Bacilli</taxon>
        <taxon>Bacillales</taxon>
        <taxon>Bacillaceae</taxon>
        <taxon>Bacillus</taxon>
        <taxon>Bacillus cereus group</taxon>
    </lineage>
</organism>
<proteinExistence type="inferred from homology"/>
<protein>
    <recommendedName>
        <fullName evidence="1">Phospho-N-acetylmuramoyl-pentapeptide-transferase</fullName>
        <ecNumber evidence="1">2.7.8.13</ecNumber>
    </recommendedName>
    <alternativeName>
        <fullName evidence="1">UDP-MurNAc-pentapeptide phosphotransferase</fullName>
    </alternativeName>
</protein>
<sequence>MLEQGLLVTAGVAFLISVALSPLFIPFLRKLKFGQSIRDEGPKSHQKKSGTPTMGGIVIYVSMMVTTLIMAIKFEHLGAEVSLLLLVTFGYGLIGFLDDYIKVVKKRNLGLTSKQKLLGQLIIAIAFFAIAKGQGFDTHLMIPGTDITFDLYWAYFILVLFMLIGGSNAVNLTDGLDGLLSGTAAIAFGAFSIIAVAQEQYAVAIFCMAVVGAVLGFLVFNANPAKVFMGDTGSLALGGAIAAVAILLKQELLLVIIGGVFVMETLSVIIQVISFKTTGKRVFKMSPLHHHYELCGWSEWRVVVTFWSVGFLLAVLGIYIGVWM</sequence>
<dbReference type="EC" id="2.7.8.13" evidence="1"/>
<dbReference type="EMBL" id="CP000764">
    <property type="protein sequence ID" value="ABS22797.1"/>
    <property type="molecule type" value="Genomic_DNA"/>
</dbReference>
<dbReference type="RefSeq" id="WP_012095004.1">
    <property type="nucleotide sequence ID" value="NC_009674.1"/>
</dbReference>
<dbReference type="SMR" id="A7GRN9"/>
<dbReference type="STRING" id="315749.Bcer98_2563"/>
<dbReference type="GeneID" id="33897816"/>
<dbReference type="KEGG" id="bcy:Bcer98_2563"/>
<dbReference type="eggNOG" id="COG0472">
    <property type="taxonomic scope" value="Bacteria"/>
</dbReference>
<dbReference type="HOGENOM" id="CLU_023982_0_1_9"/>
<dbReference type="OrthoDB" id="9805475at2"/>
<dbReference type="UniPathway" id="UPA00219"/>
<dbReference type="Proteomes" id="UP000002300">
    <property type="component" value="Chromosome"/>
</dbReference>
<dbReference type="GO" id="GO:0005886">
    <property type="term" value="C:plasma membrane"/>
    <property type="evidence" value="ECO:0007669"/>
    <property type="project" value="UniProtKB-SubCell"/>
</dbReference>
<dbReference type="GO" id="GO:0046872">
    <property type="term" value="F:metal ion binding"/>
    <property type="evidence" value="ECO:0007669"/>
    <property type="project" value="UniProtKB-KW"/>
</dbReference>
<dbReference type="GO" id="GO:0008963">
    <property type="term" value="F:phospho-N-acetylmuramoyl-pentapeptide-transferase activity"/>
    <property type="evidence" value="ECO:0007669"/>
    <property type="project" value="UniProtKB-UniRule"/>
</dbReference>
<dbReference type="GO" id="GO:0051992">
    <property type="term" value="F:UDP-N-acetylmuramoyl-L-alanyl-D-glutamyl-meso-2,6-diaminopimelyl-D-alanyl-D-alanine:undecaprenyl-phosphate transferase activity"/>
    <property type="evidence" value="ECO:0007669"/>
    <property type="project" value="RHEA"/>
</dbReference>
<dbReference type="GO" id="GO:0051301">
    <property type="term" value="P:cell division"/>
    <property type="evidence" value="ECO:0007669"/>
    <property type="project" value="UniProtKB-KW"/>
</dbReference>
<dbReference type="GO" id="GO:0071555">
    <property type="term" value="P:cell wall organization"/>
    <property type="evidence" value="ECO:0007669"/>
    <property type="project" value="UniProtKB-KW"/>
</dbReference>
<dbReference type="GO" id="GO:0009252">
    <property type="term" value="P:peptidoglycan biosynthetic process"/>
    <property type="evidence" value="ECO:0007669"/>
    <property type="project" value="UniProtKB-UniRule"/>
</dbReference>
<dbReference type="GO" id="GO:0008360">
    <property type="term" value="P:regulation of cell shape"/>
    <property type="evidence" value="ECO:0007669"/>
    <property type="project" value="UniProtKB-KW"/>
</dbReference>
<dbReference type="CDD" id="cd06852">
    <property type="entry name" value="GT_MraY"/>
    <property type="match status" value="1"/>
</dbReference>
<dbReference type="HAMAP" id="MF_00038">
    <property type="entry name" value="MraY"/>
    <property type="match status" value="1"/>
</dbReference>
<dbReference type="InterPro" id="IPR000715">
    <property type="entry name" value="Glycosyl_transferase_4"/>
</dbReference>
<dbReference type="InterPro" id="IPR003524">
    <property type="entry name" value="PNAcMuramoyl-5peptid_Trfase"/>
</dbReference>
<dbReference type="InterPro" id="IPR018480">
    <property type="entry name" value="PNAcMuramoyl-5peptid_Trfase_CS"/>
</dbReference>
<dbReference type="NCBIfam" id="TIGR00445">
    <property type="entry name" value="mraY"/>
    <property type="match status" value="1"/>
</dbReference>
<dbReference type="PANTHER" id="PTHR22926">
    <property type="entry name" value="PHOSPHO-N-ACETYLMURAMOYL-PENTAPEPTIDE-TRANSFERASE"/>
    <property type="match status" value="1"/>
</dbReference>
<dbReference type="PANTHER" id="PTHR22926:SF5">
    <property type="entry name" value="PHOSPHO-N-ACETYLMURAMOYL-PENTAPEPTIDE-TRANSFERASE HOMOLOG"/>
    <property type="match status" value="1"/>
</dbReference>
<dbReference type="Pfam" id="PF00953">
    <property type="entry name" value="Glycos_transf_4"/>
    <property type="match status" value="1"/>
</dbReference>
<dbReference type="Pfam" id="PF10555">
    <property type="entry name" value="MraY_sig1"/>
    <property type="match status" value="1"/>
</dbReference>
<dbReference type="PROSITE" id="PS01348">
    <property type="entry name" value="MRAY_2"/>
    <property type="match status" value="1"/>
</dbReference>
<comment type="function">
    <text evidence="1">Catalyzes the initial step of the lipid cycle reactions in the biosynthesis of the cell wall peptidoglycan: transfers peptidoglycan precursor phospho-MurNAc-pentapeptide from UDP-MurNAc-pentapeptide onto the lipid carrier undecaprenyl phosphate, yielding undecaprenyl-pyrophosphoryl-MurNAc-pentapeptide, known as lipid I.</text>
</comment>
<comment type="catalytic activity">
    <reaction evidence="1">
        <text>UDP-N-acetyl-alpha-D-muramoyl-L-alanyl-gamma-D-glutamyl-meso-2,6-diaminopimeloyl-D-alanyl-D-alanine + di-trans,octa-cis-undecaprenyl phosphate = di-trans,octa-cis-undecaprenyl diphospho-N-acetyl-alpha-D-muramoyl-L-alanyl-D-glutamyl-meso-2,6-diaminopimeloyl-D-alanyl-D-alanine + UMP</text>
        <dbReference type="Rhea" id="RHEA:28386"/>
        <dbReference type="ChEBI" id="CHEBI:57865"/>
        <dbReference type="ChEBI" id="CHEBI:60392"/>
        <dbReference type="ChEBI" id="CHEBI:61386"/>
        <dbReference type="ChEBI" id="CHEBI:61387"/>
        <dbReference type="EC" id="2.7.8.13"/>
    </reaction>
</comment>
<comment type="cofactor">
    <cofactor evidence="1">
        <name>Mg(2+)</name>
        <dbReference type="ChEBI" id="CHEBI:18420"/>
    </cofactor>
</comment>
<comment type="pathway">
    <text evidence="1">Cell wall biogenesis; peptidoglycan biosynthesis.</text>
</comment>
<comment type="subcellular location">
    <subcellularLocation>
        <location evidence="1">Cell membrane</location>
        <topology evidence="1">Multi-pass membrane protein</topology>
    </subcellularLocation>
</comment>
<comment type="similarity">
    <text evidence="1">Belongs to the glycosyltransferase 4 family. MraY subfamily.</text>
</comment>
<accession>A7GRN9</accession>
<reference key="1">
    <citation type="journal article" date="2008" name="Chem. Biol. Interact.">
        <title>Extending the Bacillus cereus group genomics to putative food-borne pathogens of different toxicity.</title>
        <authorList>
            <person name="Lapidus A."/>
            <person name="Goltsman E."/>
            <person name="Auger S."/>
            <person name="Galleron N."/>
            <person name="Segurens B."/>
            <person name="Dossat C."/>
            <person name="Land M.L."/>
            <person name="Broussolle V."/>
            <person name="Brillard J."/>
            <person name="Guinebretiere M.-H."/>
            <person name="Sanchis V."/>
            <person name="Nguen-the C."/>
            <person name="Lereclus D."/>
            <person name="Richardson P."/>
            <person name="Wincker P."/>
            <person name="Weissenbach J."/>
            <person name="Ehrlich S.D."/>
            <person name="Sorokin A."/>
        </authorList>
    </citation>
    <scope>NUCLEOTIDE SEQUENCE [LARGE SCALE GENOMIC DNA]</scope>
    <source>
        <strain>DSM 22905 / CIP 110041 / 391-98 / NVH 391-98</strain>
    </source>
</reference>
<keyword id="KW-0131">Cell cycle</keyword>
<keyword id="KW-0132">Cell division</keyword>
<keyword id="KW-1003">Cell membrane</keyword>
<keyword id="KW-0133">Cell shape</keyword>
<keyword id="KW-0961">Cell wall biogenesis/degradation</keyword>
<keyword id="KW-0460">Magnesium</keyword>
<keyword id="KW-0472">Membrane</keyword>
<keyword id="KW-0479">Metal-binding</keyword>
<keyword id="KW-0573">Peptidoglycan synthesis</keyword>
<keyword id="KW-0808">Transferase</keyword>
<keyword id="KW-0812">Transmembrane</keyword>
<keyword id="KW-1133">Transmembrane helix</keyword>
<feature type="chain" id="PRO_1000074531" description="Phospho-N-acetylmuramoyl-pentapeptide-transferase">
    <location>
        <begin position="1"/>
        <end position="324"/>
    </location>
</feature>
<feature type="transmembrane region" description="Helical" evidence="1">
    <location>
        <begin position="5"/>
        <end position="25"/>
    </location>
</feature>
<feature type="transmembrane region" description="Helical" evidence="1">
    <location>
        <begin position="52"/>
        <end position="72"/>
    </location>
</feature>
<feature type="transmembrane region" description="Helical" evidence="1">
    <location>
        <begin position="77"/>
        <end position="97"/>
    </location>
</feature>
<feature type="transmembrane region" description="Helical" evidence="1">
    <location>
        <begin position="117"/>
        <end position="137"/>
    </location>
</feature>
<feature type="transmembrane region" description="Helical" evidence="1">
    <location>
        <begin position="147"/>
        <end position="167"/>
    </location>
</feature>
<feature type="transmembrane region" description="Helical" evidence="1">
    <location>
        <begin position="176"/>
        <end position="196"/>
    </location>
</feature>
<feature type="transmembrane region" description="Helical" evidence="1">
    <location>
        <begin position="202"/>
        <end position="222"/>
    </location>
</feature>
<feature type="transmembrane region" description="Helical" evidence="1">
    <location>
        <begin position="227"/>
        <end position="247"/>
    </location>
</feature>
<feature type="transmembrane region" description="Helical" evidence="1">
    <location>
        <begin position="253"/>
        <end position="273"/>
    </location>
</feature>
<feature type="transmembrane region" description="Helical" evidence="1">
    <location>
        <begin position="302"/>
        <end position="322"/>
    </location>
</feature>
<name>MRAY_BACCN</name>
<evidence type="ECO:0000255" key="1">
    <source>
        <dbReference type="HAMAP-Rule" id="MF_00038"/>
    </source>
</evidence>
<gene>
    <name evidence="1" type="primary">mraY</name>
    <name type="ordered locus">Bcer98_2563</name>
</gene>